<dbReference type="EC" id="1.14.14.81" evidence="2"/>
<dbReference type="EMBL" id="D14590">
    <property type="protein sequence ID" value="BAA03440.1"/>
    <property type="molecule type" value="mRNA"/>
</dbReference>
<dbReference type="SMR" id="O04773"/>
<dbReference type="BRENDA" id="1.14.14.81">
    <property type="organism ID" value="14359"/>
</dbReference>
<dbReference type="UniPathway" id="UPA00009"/>
<dbReference type="GO" id="GO:0033772">
    <property type="term" value="F:flavonoid 3',5'-hydroxylase activity"/>
    <property type="evidence" value="ECO:0007669"/>
    <property type="project" value="UniProtKB-EC"/>
</dbReference>
<dbReference type="GO" id="GO:0020037">
    <property type="term" value="F:heme binding"/>
    <property type="evidence" value="ECO:0007669"/>
    <property type="project" value="InterPro"/>
</dbReference>
<dbReference type="GO" id="GO:0005506">
    <property type="term" value="F:iron ion binding"/>
    <property type="evidence" value="ECO:0007669"/>
    <property type="project" value="InterPro"/>
</dbReference>
<dbReference type="GO" id="GO:0009718">
    <property type="term" value="P:anthocyanin-containing compound biosynthetic process"/>
    <property type="evidence" value="ECO:0007669"/>
    <property type="project" value="UniProtKB-UniPathway"/>
</dbReference>
<dbReference type="CDD" id="cd20657">
    <property type="entry name" value="CYP75"/>
    <property type="match status" value="1"/>
</dbReference>
<dbReference type="FunFam" id="1.10.630.10:FF:000026">
    <property type="entry name" value="Cytochrome P450 82C4"/>
    <property type="match status" value="1"/>
</dbReference>
<dbReference type="Gene3D" id="1.10.630.10">
    <property type="entry name" value="Cytochrome P450"/>
    <property type="match status" value="1"/>
</dbReference>
<dbReference type="InterPro" id="IPR001128">
    <property type="entry name" value="Cyt_P450"/>
</dbReference>
<dbReference type="InterPro" id="IPR017972">
    <property type="entry name" value="Cyt_P450_CS"/>
</dbReference>
<dbReference type="InterPro" id="IPR002401">
    <property type="entry name" value="Cyt_P450_E_grp-I"/>
</dbReference>
<dbReference type="InterPro" id="IPR036396">
    <property type="entry name" value="Cyt_P450_sf"/>
</dbReference>
<dbReference type="PANTHER" id="PTHR47944">
    <property type="entry name" value="CYTOCHROME P450 98A9"/>
    <property type="match status" value="1"/>
</dbReference>
<dbReference type="PANTHER" id="PTHR47944:SF18">
    <property type="entry name" value="FLAVONOID 3'-MONOOXYGENASE"/>
    <property type="match status" value="1"/>
</dbReference>
<dbReference type="Pfam" id="PF00067">
    <property type="entry name" value="p450"/>
    <property type="match status" value="1"/>
</dbReference>
<dbReference type="PRINTS" id="PR00463">
    <property type="entry name" value="EP450I"/>
</dbReference>
<dbReference type="PRINTS" id="PR00385">
    <property type="entry name" value="P450"/>
</dbReference>
<dbReference type="SUPFAM" id="SSF48264">
    <property type="entry name" value="Cytochrome P450"/>
    <property type="match status" value="1"/>
</dbReference>
<dbReference type="PROSITE" id="PS00086">
    <property type="entry name" value="CYTOCHROME_P450"/>
    <property type="match status" value="1"/>
</dbReference>
<gene>
    <name type="primary">CYP75A6</name>
</gene>
<reference key="1">
    <citation type="submission" date="1993-03" db="EMBL/GenBank/DDBJ databases">
        <authorList>
            <person name="Ohbayashi M."/>
        </authorList>
    </citation>
    <scope>NUCLEOTIDE SEQUENCE [MRNA]</scope>
    <source>
        <tissue>Petal</tissue>
    </source>
</reference>
<sequence>MSIDISTLFYELVAAISLYLATYSFIRFLFKPSHHHHLPPGPTGWPIIGALPLLGTMPHVSLADMAVKYGPIMYLKLGSKGTVVASNPKAARAFLKTHDANFSNRPIDGGPTYLAYNAQDMVFAEYGPKWKLLRKLCSLHMLGPKALEDWAHVKVSEVGHMLKEMYEQSSKSVPVPVVVPEMLTYAMANMIGRIILSRRPFVITSKLDSSASASASVSEFQYMVMELMRMAGLFNIGDFIPYIAWMDLQGIQRDMKVIQKKFDVLLNKMIKEHTESAHDRKDNPDFLDILMAATQENTEGIQLNLVNVKALLLDLFTAGTDTSSSVIEWALAEMLNHRQILNRAHEEMDQVIGRNRRLEQSDIPNLPYFQAICKETFRKHPSTPLNLPRISTEACEVDGFHIPKNTRLIVNIWAIGRDPKVWENPLDFTPERFLSEKHAKIDPRGNHFELIPFGAGRRICAGARMGAASVEYILGTLVHSFDWKLPDGVVEVNMEESFGIALQKKVPLSAIVTPRLPPSSYTV</sequence>
<protein>
    <recommendedName>
        <fullName>Flavonoid 3',5'-hydroxylase</fullName>
        <shortName>F3'5'H</shortName>
        <ecNumber evidence="2">1.14.14.81</ecNumber>
    </recommendedName>
    <alternativeName>
        <fullName>Cytochrome P450 75A6</fullName>
    </alternativeName>
</protein>
<proteinExistence type="evidence at transcript level"/>
<name>C75A6_CAMME</name>
<accession>O04773</accession>
<comment type="function">
    <text evidence="2">Catalyzes the 3'5'-hydroxylation of naringenin and eriodictyol to form 5,7,3,'4',5'-pentahydroxyflavanone and 3',5'-hydroxylation of dihydrokaempferol and dihydroquercetin to form dihydromyricetin.</text>
</comment>
<comment type="catalytic activity">
    <reaction evidence="2">
        <text>a 3',5'-unsubstituted flavanone + 2 reduced [NADPH--hemoprotein reductase] + 2 O2 = a 3',5'-dihydroxyflavanone + 2 oxidized [NADPH--hemoprotein reductase] + 2 H2O + 2 H(+)</text>
        <dbReference type="Rhea" id="RHEA:55448"/>
        <dbReference type="Rhea" id="RHEA-COMP:11964"/>
        <dbReference type="Rhea" id="RHEA-COMP:11965"/>
        <dbReference type="ChEBI" id="CHEBI:15377"/>
        <dbReference type="ChEBI" id="CHEBI:15378"/>
        <dbReference type="ChEBI" id="CHEBI:15379"/>
        <dbReference type="ChEBI" id="CHEBI:48025"/>
        <dbReference type="ChEBI" id="CHEBI:57618"/>
        <dbReference type="ChEBI" id="CHEBI:58210"/>
        <dbReference type="ChEBI" id="CHEBI:138897"/>
        <dbReference type="EC" id="1.14.14.81"/>
    </reaction>
</comment>
<comment type="cofactor">
    <cofactor evidence="1">
        <name>heme</name>
        <dbReference type="ChEBI" id="CHEBI:30413"/>
    </cofactor>
</comment>
<comment type="pathway">
    <text>Pigment biosynthesis; anthocyanin biosynthesis.</text>
</comment>
<comment type="similarity">
    <text evidence="3">Belongs to the cytochrome P450 family.</text>
</comment>
<feature type="chain" id="PRO_0000052135" description="Flavonoid 3',5'-hydroxylase">
    <location>
        <begin position="1"/>
        <end position="523"/>
    </location>
</feature>
<feature type="binding site" description="axial binding residue" evidence="1">
    <location>
        <position position="460"/>
    </location>
    <ligand>
        <name>heme</name>
        <dbReference type="ChEBI" id="CHEBI:30413"/>
    </ligand>
    <ligandPart>
        <name>Fe</name>
        <dbReference type="ChEBI" id="CHEBI:18248"/>
    </ligandPart>
</feature>
<keyword id="KW-0349">Heme</keyword>
<keyword id="KW-0408">Iron</keyword>
<keyword id="KW-0479">Metal-binding</keyword>
<keyword id="KW-0503">Monooxygenase</keyword>
<keyword id="KW-0521">NADP</keyword>
<keyword id="KW-0560">Oxidoreductase</keyword>
<evidence type="ECO:0000250" key="1"/>
<evidence type="ECO:0000250" key="2">
    <source>
        <dbReference type="UniProtKB" id="P48418"/>
    </source>
</evidence>
<evidence type="ECO:0000305" key="3"/>
<organism>
    <name type="scientific">Campanula medium</name>
    <name type="common">Canterbury bells</name>
    <dbReference type="NCBI Taxonomy" id="56154"/>
    <lineage>
        <taxon>Eukaryota</taxon>
        <taxon>Viridiplantae</taxon>
        <taxon>Streptophyta</taxon>
        <taxon>Embryophyta</taxon>
        <taxon>Tracheophyta</taxon>
        <taxon>Spermatophyta</taxon>
        <taxon>Magnoliopsida</taxon>
        <taxon>eudicotyledons</taxon>
        <taxon>Gunneridae</taxon>
        <taxon>Pentapetalae</taxon>
        <taxon>asterids</taxon>
        <taxon>campanulids</taxon>
        <taxon>Asterales</taxon>
        <taxon>Campanulaceae</taxon>
        <taxon>Campanula</taxon>
    </lineage>
</organism>